<accession>Q56201</accession>
<organism>
    <name type="scientific">Staphylococcus xylosus</name>
    <dbReference type="NCBI Taxonomy" id="1288"/>
    <lineage>
        <taxon>Bacteria</taxon>
        <taxon>Bacillati</taxon>
        <taxon>Bacillota</taxon>
        <taxon>Bacilli</taxon>
        <taxon>Bacillales</taxon>
        <taxon>Staphylococcaceae</taxon>
        <taxon>Staphylococcus</taxon>
    </lineage>
</organism>
<comment type="function">
    <text>Transcriptional repressor of the malA gene for maltase.</text>
</comment>
<evidence type="ECO:0000255" key="1">
    <source>
        <dbReference type="PROSITE-ProRule" id="PRU00111"/>
    </source>
</evidence>
<gene>
    <name type="primary">malR</name>
</gene>
<feature type="chain" id="PRO_0000107969" description="HTH-type transcriptional regulator MalR">
    <location>
        <begin position="1"/>
        <end position="337"/>
    </location>
</feature>
<feature type="domain" description="HTH lacI-type" evidence="1">
    <location>
        <begin position="1"/>
        <end position="56"/>
    </location>
</feature>
<feature type="DNA-binding region" description="H-T-H motif" evidence="1">
    <location>
        <begin position="4"/>
        <end position="23"/>
    </location>
</feature>
<dbReference type="EMBL" id="X78853">
    <property type="protein sequence ID" value="CAA55408.1"/>
    <property type="molecule type" value="Genomic_DNA"/>
</dbReference>
<dbReference type="PIR" id="S44187">
    <property type="entry name" value="S44187"/>
</dbReference>
<dbReference type="RefSeq" id="WP_047172334.1">
    <property type="nucleotide sequence ID" value="NZ_LN554884.1"/>
</dbReference>
<dbReference type="SMR" id="Q56201"/>
<dbReference type="STRING" id="1288.AWC37_05435"/>
<dbReference type="KEGG" id="sxo:SXYL_01350"/>
<dbReference type="eggNOG" id="COG1609">
    <property type="taxonomic scope" value="Bacteria"/>
</dbReference>
<dbReference type="GO" id="GO:0003700">
    <property type="term" value="F:DNA-binding transcription factor activity"/>
    <property type="evidence" value="ECO:0007669"/>
    <property type="project" value="TreeGrafter"/>
</dbReference>
<dbReference type="GO" id="GO:0000976">
    <property type="term" value="F:transcription cis-regulatory region binding"/>
    <property type="evidence" value="ECO:0007669"/>
    <property type="project" value="TreeGrafter"/>
</dbReference>
<dbReference type="CDD" id="cd01392">
    <property type="entry name" value="HTH_LacI"/>
    <property type="match status" value="1"/>
</dbReference>
<dbReference type="CDD" id="cd06294">
    <property type="entry name" value="PBP1_MalR-like"/>
    <property type="match status" value="1"/>
</dbReference>
<dbReference type="Gene3D" id="3.40.50.2300">
    <property type="match status" value="2"/>
</dbReference>
<dbReference type="Gene3D" id="1.10.260.40">
    <property type="entry name" value="lambda repressor-like DNA-binding domains"/>
    <property type="match status" value="1"/>
</dbReference>
<dbReference type="InterPro" id="IPR000843">
    <property type="entry name" value="HTH_LacI"/>
</dbReference>
<dbReference type="InterPro" id="IPR046335">
    <property type="entry name" value="LacI/GalR-like_sensor"/>
</dbReference>
<dbReference type="InterPro" id="IPR010982">
    <property type="entry name" value="Lambda_DNA-bd_dom_sf"/>
</dbReference>
<dbReference type="InterPro" id="IPR028082">
    <property type="entry name" value="Peripla_BP_I"/>
</dbReference>
<dbReference type="PANTHER" id="PTHR30146:SF109">
    <property type="entry name" value="HTH-TYPE TRANSCRIPTIONAL REGULATOR GALS"/>
    <property type="match status" value="1"/>
</dbReference>
<dbReference type="PANTHER" id="PTHR30146">
    <property type="entry name" value="LACI-RELATED TRANSCRIPTIONAL REPRESSOR"/>
    <property type="match status" value="1"/>
</dbReference>
<dbReference type="Pfam" id="PF00356">
    <property type="entry name" value="LacI"/>
    <property type="match status" value="1"/>
</dbReference>
<dbReference type="Pfam" id="PF13377">
    <property type="entry name" value="Peripla_BP_3"/>
    <property type="match status" value="1"/>
</dbReference>
<dbReference type="PRINTS" id="PR00036">
    <property type="entry name" value="HTHLACI"/>
</dbReference>
<dbReference type="SMART" id="SM00354">
    <property type="entry name" value="HTH_LACI"/>
    <property type="match status" value="1"/>
</dbReference>
<dbReference type="SUPFAM" id="SSF47413">
    <property type="entry name" value="lambda repressor-like DNA-binding domains"/>
    <property type="match status" value="1"/>
</dbReference>
<dbReference type="SUPFAM" id="SSF53822">
    <property type="entry name" value="Periplasmic binding protein-like I"/>
    <property type="match status" value="1"/>
</dbReference>
<dbReference type="PROSITE" id="PS00356">
    <property type="entry name" value="HTH_LACI_1"/>
    <property type="match status" value="1"/>
</dbReference>
<dbReference type="PROSITE" id="PS50932">
    <property type="entry name" value="HTH_LACI_2"/>
    <property type="match status" value="1"/>
</dbReference>
<reference key="1">
    <citation type="journal article" date="1995" name="J. Bacteriol.">
        <title>Characterization of a genetic locus essential for maltose-maltotriose utilization in Staphylococcus xylosus.</title>
        <authorList>
            <person name="Egeter O."/>
            <person name="Brueckner R."/>
        </authorList>
    </citation>
    <scope>NUCLEOTIDE SEQUENCE [GENOMIC DNA]</scope>
    <source>
        <strain>DSM 20267 / Isolate C2A</strain>
    </source>
</reference>
<name>MALR_STAXY</name>
<protein>
    <recommendedName>
        <fullName>HTH-type transcriptional regulator MalR</fullName>
    </recommendedName>
    <alternativeName>
        <fullName>Maltose operon transcriptional repressor</fullName>
    </alternativeName>
</protein>
<proteinExistence type="predicted"/>
<sequence>MVTIKDIAQAANVSTSTVSRVISGNPRISMQTREKVKATMKSFNYQPNRAARTLATKQSNTIGIIQKSASIEDSQNPFVLDVLSGIFSKCKNHGYATISTTKGQSIEIELEVQEMIHYHSVDGFIVLYSKKSDPIIDILKSHAMPYVIIGKPLTDDDIIHIDNDNVSASQSLTRYLIDKGHNKFLFVAETGNYEVVKDRIAGHLNAIEQTDSVTDIVYFAKNRHYIRSFFQDLIEHRTLPTVVITSDTLLNHLILSVFYELKLHIPTDIQTATFNDSYLNAFASPPQTTVDIYPKLLGEGAAESAINIIQGHNILNFYKLIPTTIIERESTTTIQEV</sequence>
<keyword id="KW-0238">DNA-binding</keyword>
<keyword id="KW-0678">Repressor</keyword>
<keyword id="KW-0804">Transcription</keyword>
<keyword id="KW-0805">Transcription regulation</keyword>